<keyword id="KW-0002">3D-structure</keyword>
<keyword id="KW-1017">Isopeptide bond</keyword>
<keyword id="KW-1185">Reference proteome</keyword>
<keyword id="KW-0832">Ubl conjugation</keyword>
<comment type="miscellaneous">
    <text evidence="2">Present with 1230 molecules/cell in log phase SD medium.</text>
</comment>
<feature type="chain" id="PRO_0000202952" description="Uncharacterized protein YIL161W">
    <location>
        <begin position="1"/>
        <end position="235"/>
    </location>
</feature>
<feature type="region of interest" description="Disordered" evidence="1">
    <location>
        <begin position="1"/>
        <end position="98"/>
    </location>
</feature>
<feature type="compositionally biased region" description="Basic residues" evidence="1">
    <location>
        <begin position="38"/>
        <end position="50"/>
    </location>
</feature>
<feature type="compositionally biased region" description="Basic and acidic residues" evidence="1">
    <location>
        <begin position="51"/>
        <end position="60"/>
    </location>
</feature>
<feature type="cross-link" description="Glycyl lysine isopeptide (Lys-Gly) (interchain with G-Cter in ubiquitin)" evidence="3">
    <location>
        <position position="16"/>
    </location>
</feature>
<feature type="cross-link" description="Glycyl lysine isopeptide (Lys-Gly) (interchain with G-Cter in ubiquitin)" evidence="3">
    <location>
        <position position="35"/>
    </location>
</feature>
<organism>
    <name type="scientific">Saccharomyces cerevisiae (strain ATCC 204508 / S288c)</name>
    <name type="common">Baker's yeast</name>
    <dbReference type="NCBI Taxonomy" id="559292"/>
    <lineage>
        <taxon>Eukaryota</taxon>
        <taxon>Fungi</taxon>
        <taxon>Dikarya</taxon>
        <taxon>Ascomycota</taxon>
        <taxon>Saccharomycotina</taxon>
        <taxon>Saccharomycetes</taxon>
        <taxon>Saccharomycetales</taxon>
        <taxon>Saccharomycetaceae</taxon>
        <taxon>Saccharomyces</taxon>
    </lineage>
</organism>
<reference key="1">
    <citation type="journal article" date="1997" name="Nature">
        <title>The nucleotide sequence of Saccharomyces cerevisiae chromosome IX.</title>
        <authorList>
            <person name="Churcher C.M."/>
            <person name="Bowman S."/>
            <person name="Badcock K."/>
            <person name="Bankier A.T."/>
            <person name="Brown D."/>
            <person name="Chillingworth T."/>
            <person name="Connor R."/>
            <person name="Devlin K."/>
            <person name="Gentles S."/>
            <person name="Hamlin N."/>
            <person name="Harris D.E."/>
            <person name="Horsnell T."/>
            <person name="Hunt S."/>
            <person name="Jagels K."/>
            <person name="Jones M."/>
            <person name="Lye G."/>
            <person name="Moule S."/>
            <person name="Odell C."/>
            <person name="Pearson D."/>
            <person name="Rajandream M.A."/>
            <person name="Rice P."/>
            <person name="Rowley N."/>
            <person name="Skelton J."/>
            <person name="Smith V."/>
            <person name="Walsh S.V."/>
            <person name="Whitehead S."/>
            <person name="Barrell B.G."/>
        </authorList>
    </citation>
    <scope>NUCLEOTIDE SEQUENCE [LARGE SCALE GENOMIC DNA]</scope>
    <source>
        <strain>ATCC 204508 / S288c</strain>
    </source>
</reference>
<reference key="2">
    <citation type="journal article" date="2014" name="G3 (Bethesda)">
        <title>The reference genome sequence of Saccharomyces cerevisiae: Then and now.</title>
        <authorList>
            <person name="Engel S.R."/>
            <person name="Dietrich F.S."/>
            <person name="Fisk D.G."/>
            <person name="Binkley G."/>
            <person name="Balakrishnan R."/>
            <person name="Costanzo M.C."/>
            <person name="Dwight S.S."/>
            <person name="Hitz B.C."/>
            <person name="Karra K."/>
            <person name="Nash R.S."/>
            <person name="Weng S."/>
            <person name="Wong E.D."/>
            <person name="Lloyd P."/>
            <person name="Skrzypek M.S."/>
            <person name="Miyasato S.R."/>
            <person name="Simison M."/>
            <person name="Cherry J.M."/>
        </authorList>
    </citation>
    <scope>GENOME REANNOTATION</scope>
    <source>
        <strain>ATCC 204508 / S288c</strain>
    </source>
</reference>
<reference key="3">
    <citation type="journal article" date="2003" name="Nature">
        <title>Global analysis of protein expression in yeast.</title>
        <authorList>
            <person name="Ghaemmaghami S."/>
            <person name="Huh W.-K."/>
            <person name="Bower K."/>
            <person name="Howson R.W."/>
            <person name="Belle A."/>
            <person name="Dephoure N."/>
            <person name="O'Shea E.K."/>
            <person name="Weissman J.S."/>
        </authorList>
    </citation>
    <scope>LEVEL OF PROTEIN EXPRESSION [LARGE SCALE ANALYSIS]</scope>
</reference>
<reference key="4">
    <citation type="journal article" date="2012" name="Proteomics">
        <title>Sites of ubiquitin attachment in Saccharomyces cerevisiae.</title>
        <authorList>
            <person name="Starita L.M."/>
            <person name="Lo R.S."/>
            <person name="Eng J.K."/>
            <person name="von Haller P.D."/>
            <person name="Fields S."/>
        </authorList>
    </citation>
    <scope>UBIQUITINATION [LARGE SCALE ANALYSIS] AT LYS-16 AND LYS-35</scope>
    <scope>IDENTIFICATION BY MASS SPECTROMETRY [LARGE SCALE ANALYSIS]</scope>
</reference>
<dbReference type="EMBL" id="Z38059">
    <property type="protein sequence ID" value="CAA86117.1"/>
    <property type="molecule type" value="Genomic_DNA"/>
</dbReference>
<dbReference type="EMBL" id="BK006942">
    <property type="protein sequence ID" value="DAA08391.1"/>
    <property type="molecule type" value="Genomic_DNA"/>
</dbReference>
<dbReference type="PIR" id="S48373">
    <property type="entry name" value="S48373"/>
</dbReference>
<dbReference type="PDB" id="7ZW0">
    <property type="method" value="EM"/>
    <property type="resolution" value="2.40 A"/>
    <property type="chains" value="sj=1-235"/>
</dbReference>
<dbReference type="PDBsum" id="7ZW0"/>
<dbReference type="EMDB" id="EMD-14990"/>
<dbReference type="SMR" id="P40449"/>
<dbReference type="BioGRID" id="34831">
    <property type="interactions" value="119"/>
</dbReference>
<dbReference type="FunCoup" id="P40449">
    <property type="interactions" value="60"/>
</dbReference>
<dbReference type="IntAct" id="P40449">
    <property type="interactions" value="61"/>
</dbReference>
<dbReference type="MINT" id="P40449"/>
<dbReference type="STRING" id="4932.YIL161W"/>
<dbReference type="iPTMnet" id="P40449"/>
<dbReference type="PaxDb" id="4932-YIL161W"/>
<dbReference type="PeptideAtlas" id="P40449"/>
<dbReference type="EnsemblFungi" id="YIL161W_mRNA">
    <property type="protein sequence ID" value="YIL161W"/>
    <property type="gene ID" value="YIL161W"/>
</dbReference>
<dbReference type="KEGG" id="sce:YIL161W"/>
<dbReference type="AGR" id="SGD:S000001423"/>
<dbReference type="SGD" id="S000001423">
    <property type="gene designation" value="YIL161W"/>
</dbReference>
<dbReference type="VEuPathDB" id="FungiDB:YIL161W"/>
<dbReference type="eggNOG" id="ENOG502S7XQ">
    <property type="taxonomic scope" value="Eukaryota"/>
</dbReference>
<dbReference type="HOGENOM" id="CLU_1180998_0_0_1"/>
<dbReference type="InParanoid" id="P40449"/>
<dbReference type="OMA" id="VKEDWRI"/>
<dbReference type="OrthoDB" id="4070430at2759"/>
<dbReference type="BioCyc" id="YEAST:G3O-31408-MONOMER"/>
<dbReference type="BioGRID-ORCS" id="854645">
    <property type="hits" value="0 hits in 10 CRISPR screens"/>
</dbReference>
<dbReference type="CD-CODE" id="E03F929F">
    <property type="entry name" value="Stress granule"/>
</dbReference>
<dbReference type="PRO" id="PR:P40449"/>
<dbReference type="Proteomes" id="UP000002311">
    <property type="component" value="Chromosome IX"/>
</dbReference>
<dbReference type="RNAct" id="P40449">
    <property type="molecule type" value="protein"/>
</dbReference>
<dbReference type="GO" id="GO:0005737">
    <property type="term" value="C:cytoplasm"/>
    <property type="evidence" value="ECO:0000314"/>
    <property type="project" value="SGD"/>
</dbReference>
<dbReference type="GO" id="GO:0070651">
    <property type="term" value="P:nonfunctional rRNA decay"/>
    <property type="evidence" value="ECO:0000314"/>
    <property type="project" value="SGD"/>
</dbReference>
<sequence>MDTKLSVTGAKKSQGKASGLGNEGTPIGNEESTNKAKNGNKKRNKNRNRNKKTETKEQNEPKPVTGGEEVRVEKSQAKNRRRKNNNGANKKNTLHYSKEINVEERKQIAKRQEEIEQCIHTLSDFKLFKKGKHVTSYGYRISPMTDSGKISLKILFNIPLDYPKAPIKLTMKSNEEVSSYMDTVIANFNWKARQLVKEDWRILSQINYLVSELEILKMENYKQIDKLRNSFYKTI</sequence>
<gene>
    <name type="ordered locus">YIL161W</name>
</gene>
<protein>
    <recommendedName>
        <fullName>Uncharacterized protein YIL161W</fullName>
    </recommendedName>
</protein>
<proteinExistence type="evidence at protein level"/>
<accession>P40449</accession>
<accession>D6VVC5</accession>
<name>YIQ1_YEAST</name>
<evidence type="ECO:0000256" key="1">
    <source>
        <dbReference type="SAM" id="MobiDB-lite"/>
    </source>
</evidence>
<evidence type="ECO:0000269" key="2">
    <source>
    </source>
</evidence>
<evidence type="ECO:0007744" key="3">
    <source>
    </source>
</evidence>